<organism>
    <name type="scientific">Staphylococcus aureus (strain USA300 / TCH1516)</name>
    <dbReference type="NCBI Taxonomy" id="451516"/>
    <lineage>
        <taxon>Bacteria</taxon>
        <taxon>Bacillati</taxon>
        <taxon>Bacillota</taxon>
        <taxon>Bacilli</taxon>
        <taxon>Bacillales</taxon>
        <taxon>Staphylococcaceae</taxon>
        <taxon>Staphylococcus</taxon>
    </lineage>
</organism>
<sequence>MDNNEKEKSKSELLVVTGLSGAGKSLVIQCLEDMGYFCVDNLPPVLLPKFVELMEQGNPSLRKVAIAIDLRGKELFNSLVAVVDKVKSESDVIIDVMFLEASTEKLISRYKETRRAHPLMEQGKRSLINAINDEREHLSQIRSIANFVIDTTKLSPKELKERIRRYYEDEEFETFTINVTSFGFKHGIQMDADLVFDVRFLPNPYYVVDLRPLTGLDKDVYNYVMKWKETEIFFEKLTDLLDFMIPGYKKEGKSQLVIAIGCTGGQHRSVALAERLGNYLNEVFEYNVYVHHRDAHIESGEKK</sequence>
<gene>
    <name type="ordered locus">USA300HOU_0794</name>
</gene>
<proteinExistence type="inferred from homology"/>
<keyword id="KW-0067">ATP-binding</keyword>
<keyword id="KW-0342">GTP-binding</keyword>
<keyword id="KW-0547">Nucleotide-binding</keyword>
<accession>A8Z042</accession>
<name>Y794_STAAT</name>
<comment type="function">
    <text evidence="1">Displays ATPase and GTPase activities.</text>
</comment>
<comment type="similarity">
    <text evidence="1">Belongs to the RapZ-like family.</text>
</comment>
<evidence type="ECO:0000255" key="1">
    <source>
        <dbReference type="HAMAP-Rule" id="MF_00636"/>
    </source>
</evidence>
<protein>
    <recommendedName>
        <fullName evidence="1">Nucleotide-binding protein USA300HOU_0794</fullName>
    </recommendedName>
</protein>
<feature type="chain" id="PRO_1000082669" description="Nucleotide-binding protein USA300HOU_0794">
    <location>
        <begin position="1"/>
        <end position="303"/>
    </location>
</feature>
<feature type="binding site" evidence="1">
    <location>
        <begin position="18"/>
        <end position="25"/>
    </location>
    <ligand>
        <name>ATP</name>
        <dbReference type="ChEBI" id="CHEBI:30616"/>
    </ligand>
</feature>
<feature type="binding site" evidence="1">
    <location>
        <begin position="69"/>
        <end position="72"/>
    </location>
    <ligand>
        <name>GTP</name>
        <dbReference type="ChEBI" id="CHEBI:37565"/>
    </ligand>
</feature>
<dbReference type="EMBL" id="CP000730">
    <property type="protein sequence ID" value="ABX28815.1"/>
    <property type="molecule type" value="Genomic_DNA"/>
</dbReference>
<dbReference type="SMR" id="A8Z042"/>
<dbReference type="KEGG" id="sax:USA300HOU_0794"/>
<dbReference type="HOGENOM" id="CLU_059558_0_0_9"/>
<dbReference type="BioCyc" id="SAUR451516-HMP:GTV5-811-MONOMER"/>
<dbReference type="GO" id="GO:0005524">
    <property type="term" value="F:ATP binding"/>
    <property type="evidence" value="ECO:0007669"/>
    <property type="project" value="UniProtKB-UniRule"/>
</dbReference>
<dbReference type="GO" id="GO:0005525">
    <property type="term" value="F:GTP binding"/>
    <property type="evidence" value="ECO:0007669"/>
    <property type="project" value="UniProtKB-UniRule"/>
</dbReference>
<dbReference type="Gene3D" id="3.40.50.300">
    <property type="entry name" value="P-loop containing nucleotide triphosphate hydrolases"/>
    <property type="match status" value="1"/>
</dbReference>
<dbReference type="HAMAP" id="MF_00636">
    <property type="entry name" value="RapZ_like"/>
    <property type="match status" value="1"/>
</dbReference>
<dbReference type="InterPro" id="IPR027417">
    <property type="entry name" value="P-loop_NTPase"/>
</dbReference>
<dbReference type="InterPro" id="IPR005337">
    <property type="entry name" value="RapZ-like"/>
</dbReference>
<dbReference type="InterPro" id="IPR053930">
    <property type="entry name" value="RapZ-like_N"/>
</dbReference>
<dbReference type="InterPro" id="IPR053931">
    <property type="entry name" value="RapZ_C"/>
</dbReference>
<dbReference type="NCBIfam" id="NF003828">
    <property type="entry name" value="PRK05416.1"/>
    <property type="match status" value="1"/>
</dbReference>
<dbReference type="PANTHER" id="PTHR30448">
    <property type="entry name" value="RNASE ADAPTER PROTEIN RAPZ"/>
    <property type="match status" value="1"/>
</dbReference>
<dbReference type="PANTHER" id="PTHR30448:SF0">
    <property type="entry name" value="RNASE ADAPTER PROTEIN RAPZ"/>
    <property type="match status" value="1"/>
</dbReference>
<dbReference type="Pfam" id="PF22740">
    <property type="entry name" value="PapZ_C"/>
    <property type="match status" value="1"/>
</dbReference>
<dbReference type="Pfam" id="PF03668">
    <property type="entry name" value="RapZ-like_N"/>
    <property type="match status" value="1"/>
</dbReference>
<dbReference type="PIRSF" id="PIRSF005052">
    <property type="entry name" value="P-loopkin"/>
    <property type="match status" value="1"/>
</dbReference>
<dbReference type="SUPFAM" id="SSF52540">
    <property type="entry name" value="P-loop containing nucleoside triphosphate hydrolases"/>
    <property type="match status" value="1"/>
</dbReference>
<reference key="1">
    <citation type="journal article" date="2007" name="BMC Microbiol.">
        <title>Subtle genetic changes enhance virulence of methicillin resistant and sensitive Staphylococcus aureus.</title>
        <authorList>
            <person name="Highlander S.K."/>
            <person name="Hulten K.G."/>
            <person name="Qin X."/>
            <person name="Jiang H."/>
            <person name="Yerrapragada S."/>
            <person name="Mason E.O. Jr."/>
            <person name="Shang Y."/>
            <person name="Williams T.M."/>
            <person name="Fortunov R.M."/>
            <person name="Liu Y."/>
            <person name="Igboeli O."/>
            <person name="Petrosino J."/>
            <person name="Tirumalai M."/>
            <person name="Uzman A."/>
            <person name="Fox G.E."/>
            <person name="Cardenas A.M."/>
            <person name="Muzny D.M."/>
            <person name="Hemphill L."/>
            <person name="Ding Y."/>
            <person name="Dugan S."/>
            <person name="Blyth P.R."/>
            <person name="Buhay C.J."/>
            <person name="Dinh H.H."/>
            <person name="Hawes A.C."/>
            <person name="Holder M."/>
            <person name="Kovar C.L."/>
            <person name="Lee S.L."/>
            <person name="Liu W."/>
            <person name="Nazareth L.V."/>
            <person name="Wang Q."/>
            <person name="Zhou J."/>
            <person name="Kaplan S.L."/>
            <person name="Weinstock G.M."/>
        </authorList>
    </citation>
    <scope>NUCLEOTIDE SEQUENCE [LARGE SCALE GENOMIC DNA]</scope>
    <source>
        <strain>USA300 / TCH1516</strain>
    </source>
</reference>